<keyword id="KW-0963">Cytoplasm</keyword>
<keyword id="KW-0255">Endonuclease</keyword>
<keyword id="KW-0378">Hydrolase</keyword>
<keyword id="KW-0460">Magnesium</keyword>
<keyword id="KW-0479">Metal-binding</keyword>
<keyword id="KW-0540">Nuclease</keyword>
<evidence type="ECO:0000255" key="1">
    <source>
        <dbReference type="HAMAP-Rule" id="MF_00053"/>
    </source>
</evidence>
<evidence type="ECO:0000255" key="2">
    <source>
        <dbReference type="PROSITE-ProRule" id="PRU01319"/>
    </source>
</evidence>
<name>RNH3_STAAS</name>
<dbReference type="EC" id="3.1.26.4" evidence="1"/>
<dbReference type="EMBL" id="BX571857">
    <property type="protein sequence ID" value="CAG42849.1"/>
    <property type="molecule type" value="Genomic_DNA"/>
</dbReference>
<dbReference type="RefSeq" id="WP_001284279.1">
    <property type="nucleotide sequence ID" value="NC_002953.3"/>
</dbReference>
<dbReference type="SMR" id="Q6GA74"/>
<dbReference type="KEGG" id="sas:SAS1074"/>
<dbReference type="HOGENOM" id="CLU_059546_1_0_9"/>
<dbReference type="GO" id="GO:0005737">
    <property type="term" value="C:cytoplasm"/>
    <property type="evidence" value="ECO:0007669"/>
    <property type="project" value="UniProtKB-SubCell"/>
</dbReference>
<dbReference type="GO" id="GO:0032299">
    <property type="term" value="C:ribonuclease H2 complex"/>
    <property type="evidence" value="ECO:0007669"/>
    <property type="project" value="TreeGrafter"/>
</dbReference>
<dbReference type="GO" id="GO:0000287">
    <property type="term" value="F:magnesium ion binding"/>
    <property type="evidence" value="ECO:0007669"/>
    <property type="project" value="UniProtKB-UniRule"/>
</dbReference>
<dbReference type="GO" id="GO:0003723">
    <property type="term" value="F:RNA binding"/>
    <property type="evidence" value="ECO:0007669"/>
    <property type="project" value="InterPro"/>
</dbReference>
<dbReference type="GO" id="GO:0004523">
    <property type="term" value="F:RNA-DNA hybrid ribonuclease activity"/>
    <property type="evidence" value="ECO:0007669"/>
    <property type="project" value="UniProtKB-UniRule"/>
</dbReference>
<dbReference type="GO" id="GO:0043137">
    <property type="term" value="P:DNA replication, removal of RNA primer"/>
    <property type="evidence" value="ECO:0007669"/>
    <property type="project" value="TreeGrafter"/>
</dbReference>
<dbReference type="GO" id="GO:0006298">
    <property type="term" value="P:mismatch repair"/>
    <property type="evidence" value="ECO:0007669"/>
    <property type="project" value="TreeGrafter"/>
</dbReference>
<dbReference type="CDD" id="cd06590">
    <property type="entry name" value="RNase_HII_bacteria_HIII_like"/>
    <property type="match status" value="1"/>
</dbReference>
<dbReference type="CDD" id="cd14796">
    <property type="entry name" value="RNAse_HIII_N"/>
    <property type="match status" value="1"/>
</dbReference>
<dbReference type="FunFam" id="3.30.420.10:FF:000047">
    <property type="entry name" value="Ribonuclease HIII"/>
    <property type="match status" value="1"/>
</dbReference>
<dbReference type="Gene3D" id="3.30.420.10">
    <property type="entry name" value="Ribonuclease H-like superfamily/Ribonuclease H"/>
    <property type="match status" value="1"/>
</dbReference>
<dbReference type="Gene3D" id="3.30.310.10">
    <property type="entry name" value="TATA-Binding Protein"/>
    <property type="match status" value="1"/>
</dbReference>
<dbReference type="HAMAP" id="MF_00053">
    <property type="entry name" value="RNase_HIII"/>
    <property type="match status" value="1"/>
</dbReference>
<dbReference type="InterPro" id="IPR001352">
    <property type="entry name" value="RNase_HII/HIII"/>
</dbReference>
<dbReference type="InterPro" id="IPR024567">
    <property type="entry name" value="RNase_HII/HIII_dom"/>
</dbReference>
<dbReference type="InterPro" id="IPR004641">
    <property type="entry name" value="RNase_HIII"/>
</dbReference>
<dbReference type="InterPro" id="IPR024568">
    <property type="entry name" value="RNase_HIII_N"/>
</dbReference>
<dbReference type="InterPro" id="IPR012337">
    <property type="entry name" value="RNaseH-like_sf"/>
</dbReference>
<dbReference type="InterPro" id="IPR036397">
    <property type="entry name" value="RNaseH_sf"/>
</dbReference>
<dbReference type="InterPro" id="IPR012295">
    <property type="entry name" value="TBP_dom_sf"/>
</dbReference>
<dbReference type="NCBIfam" id="TIGR00716">
    <property type="entry name" value="rnhC"/>
    <property type="match status" value="1"/>
</dbReference>
<dbReference type="PANTHER" id="PTHR10954:SF23">
    <property type="entry name" value="RIBONUCLEASE"/>
    <property type="match status" value="1"/>
</dbReference>
<dbReference type="PANTHER" id="PTHR10954">
    <property type="entry name" value="RIBONUCLEASE H2 SUBUNIT A"/>
    <property type="match status" value="1"/>
</dbReference>
<dbReference type="Pfam" id="PF11858">
    <property type="entry name" value="DUF3378"/>
    <property type="match status" value="1"/>
</dbReference>
<dbReference type="Pfam" id="PF01351">
    <property type="entry name" value="RNase_HII"/>
    <property type="match status" value="1"/>
</dbReference>
<dbReference type="PIRSF" id="PIRSF037748">
    <property type="entry name" value="RnhC"/>
    <property type="match status" value="1"/>
</dbReference>
<dbReference type="SUPFAM" id="SSF53098">
    <property type="entry name" value="Ribonuclease H-like"/>
    <property type="match status" value="1"/>
</dbReference>
<dbReference type="PROSITE" id="PS51975">
    <property type="entry name" value="RNASE_H_2"/>
    <property type="match status" value="1"/>
</dbReference>
<gene>
    <name evidence="1" type="primary">rnhC</name>
    <name type="ordered locus">SAS1074</name>
</gene>
<organism>
    <name type="scientific">Staphylococcus aureus (strain MSSA476)</name>
    <dbReference type="NCBI Taxonomy" id="282459"/>
    <lineage>
        <taxon>Bacteria</taxon>
        <taxon>Bacillati</taxon>
        <taxon>Bacillota</taxon>
        <taxon>Bacilli</taxon>
        <taxon>Bacillales</taxon>
        <taxon>Staphylococcaceae</taxon>
        <taxon>Staphylococcus</taxon>
    </lineage>
</organism>
<reference key="1">
    <citation type="journal article" date="2004" name="Proc. Natl. Acad. Sci. U.S.A.">
        <title>Complete genomes of two clinical Staphylococcus aureus strains: evidence for the rapid evolution of virulence and drug resistance.</title>
        <authorList>
            <person name="Holden M.T.G."/>
            <person name="Feil E.J."/>
            <person name="Lindsay J.A."/>
            <person name="Peacock S.J."/>
            <person name="Day N.P.J."/>
            <person name="Enright M.C."/>
            <person name="Foster T.J."/>
            <person name="Moore C.E."/>
            <person name="Hurst L."/>
            <person name="Atkin R."/>
            <person name="Barron A."/>
            <person name="Bason N."/>
            <person name="Bentley S.D."/>
            <person name="Chillingworth C."/>
            <person name="Chillingworth T."/>
            <person name="Churcher C."/>
            <person name="Clark L."/>
            <person name="Corton C."/>
            <person name="Cronin A."/>
            <person name="Doggett J."/>
            <person name="Dowd L."/>
            <person name="Feltwell T."/>
            <person name="Hance Z."/>
            <person name="Harris B."/>
            <person name="Hauser H."/>
            <person name="Holroyd S."/>
            <person name="Jagels K."/>
            <person name="James K.D."/>
            <person name="Lennard N."/>
            <person name="Line A."/>
            <person name="Mayes R."/>
            <person name="Moule S."/>
            <person name="Mungall K."/>
            <person name="Ormond D."/>
            <person name="Quail M.A."/>
            <person name="Rabbinowitsch E."/>
            <person name="Rutherford K.M."/>
            <person name="Sanders M."/>
            <person name="Sharp S."/>
            <person name="Simmonds M."/>
            <person name="Stevens K."/>
            <person name="Whitehead S."/>
            <person name="Barrell B.G."/>
            <person name="Spratt B.G."/>
            <person name="Parkhill J."/>
        </authorList>
    </citation>
    <scope>NUCLEOTIDE SEQUENCE [LARGE SCALE GENOMIC DNA]</scope>
    <source>
        <strain>MSSA476</strain>
    </source>
</reference>
<feature type="chain" id="PRO_0000111695" description="Ribonuclease HIII">
    <location>
        <begin position="1"/>
        <end position="312"/>
    </location>
</feature>
<feature type="domain" description="RNase H type-2" evidence="2">
    <location>
        <begin position="95"/>
        <end position="311"/>
    </location>
</feature>
<feature type="binding site" evidence="1">
    <location>
        <position position="101"/>
    </location>
    <ligand>
        <name>a divalent metal cation</name>
        <dbReference type="ChEBI" id="CHEBI:60240"/>
    </ligand>
</feature>
<feature type="binding site" evidence="1">
    <location>
        <position position="102"/>
    </location>
    <ligand>
        <name>a divalent metal cation</name>
        <dbReference type="ChEBI" id="CHEBI:60240"/>
    </ligand>
</feature>
<feature type="binding site" evidence="1">
    <location>
        <position position="206"/>
    </location>
    <ligand>
        <name>a divalent metal cation</name>
        <dbReference type="ChEBI" id="CHEBI:60240"/>
    </ligand>
</feature>
<protein>
    <recommendedName>
        <fullName evidence="1">Ribonuclease HIII</fullName>
        <shortName evidence="1">RNase HIII</shortName>
        <ecNumber evidence="1">3.1.26.4</ecNumber>
    </recommendedName>
</protein>
<accession>Q6GA74</accession>
<comment type="function">
    <text evidence="1">Endonuclease that specifically degrades the RNA of RNA-DNA hybrids.</text>
</comment>
<comment type="catalytic activity">
    <reaction evidence="1">
        <text>Endonucleolytic cleavage to 5'-phosphomonoester.</text>
        <dbReference type="EC" id="3.1.26.4"/>
    </reaction>
</comment>
<comment type="cofactor">
    <cofactor evidence="1">
        <name>Mn(2+)</name>
        <dbReference type="ChEBI" id="CHEBI:29035"/>
    </cofactor>
    <cofactor evidence="1">
        <name>Mg(2+)</name>
        <dbReference type="ChEBI" id="CHEBI:18420"/>
    </cofactor>
    <text evidence="1">Manganese or magnesium. Binds 1 divalent metal ion per monomer in the absence of substrate. May bind a second metal ion after substrate binding.</text>
</comment>
<comment type="subcellular location">
    <subcellularLocation>
        <location evidence="1">Cytoplasm</location>
    </subcellularLocation>
</comment>
<comment type="similarity">
    <text evidence="1">Belongs to the RNase HII family. RnhC subfamily.</text>
</comment>
<proteinExistence type="inferred from homology"/>
<sequence>MANIVFKLSDKDITTLMSRITFDTENLPQGMKARAKYQNTTVNIYQSGKVMFQGNHAEAVSKELLPQHSQLNTNKTKKKNMANSFLEQTLMYDQFNCIGSDEAGSGDYFGPLTVCAAFVTKEHVPILKTLGVDDSKKLTDTKIVELADQLVTFIPHSLLTLHNEKYNIQQAKGWTQVKMKAVLHNEAIKNVLEKIDSSQLDYIVIDQFAKREVYNHYALSDIPLPKKTKFETKGESKSLAIAVASIISRYAFVTYMDQISKNINMTIPKGAGAKVDVIAAKIIKKYGLSHLDTISKKHFKNREKAQKILKPL</sequence>